<proteinExistence type="inferred from homology"/>
<comment type="function">
    <text evidence="1">This is one of the proteins that bind and probably mediate the attachment of the 5S RNA into the large ribosomal subunit, where it forms part of the central protuberance.</text>
</comment>
<comment type="subunit">
    <text evidence="1">Part of the 50S ribosomal subunit; part of the 5S rRNA/L5/L18/L25 subcomplex. Contacts the 5S and 23S rRNAs.</text>
</comment>
<comment type="similarity">
    <text evidence="1">Belongs to the universal ribosomal protein uL18 family.</text>
</comment>
<reference key="1">
    <citation type="journal article" date="2007" name="PLoS Genet.">
        <title>Patterns and implications of gene gain and loss in the evolution of Prochlorococcus.</title>
        <authorList>
            <person name="Kettler G.C."/>
            <person name="Martiny A.C."/>
            <person name="Huang K."/>
            <person name="Zucker J."/>
            <person name="Coleman M.L."/>
            <person name="Rodrigue S."/>
            <person name="Chen F."/>
            <person name="Lapidus A."/>
            <person name="Ferriera S."/>
            <person name="Johnson J."/>
            <person name="Steglich C."/>
            <person name="Church G.M."/>
            <person name="Richardson P."/>
            <person name="Chisholm S.W."/>
        </authorList>
    </citation>
    <scope>NUCLEOTIDE SEQUENCE [LARGE SCALE GENOMIC DNA]</scope>
    <source>
        <strain>MIT 9211</strain>
    </source>
</reference>
<sequence length="122" mass="13454">MATLSKKQQTQKRHKRLRRHLNGTNHRPRLAVFRSNNHIYAQVIDDEAQSTICSASTLDKDLREKLKASGGSCDASMAVGALLAQRALAKGIEQVVFDRGGNLYHGRVKALAKSAREAGLKF</sequence>
<accession>A9BCN2</accession>
<organism>
    <name type="scientific">Prochlorococcus marinus (strain MIT 9211)</name>
    <dbReference type="NCBI Taxonomy" id="93059"/>
    <lineage>
        <taxon>Bacteria</taxon>
        <taxon>Bacillati</taxon>
        <taxon>Cyanobacteriota</taxon>
        <taxon>Cyanophyceae</taxon>
        <taxon>Synechococcales</taxon>
        <taxon>Prochlorococcaceae</taxon>
        <taxon>Prochlorococcus</taxon>
    </lineage>
</organism>
<gene>
    <name evidence="1" type="primary">rplR</name>
    <name evidence="1" type="synonym">rpl18</name>
    <name type="ordered locus">P9211_16631</name>
</gene>
<evidence type="ECO:0000255" key="1">
    <source>
        <dbReference type="HAMAP-Rule" id="MF_01337"/>
    </source>
</evidence>
<evidence type="ECO:0000256" key="2">
    <source>
        <dbReference type="SAM" id="MobiDB-lite"/>
    </source>
</evidence>
<evidence type="ECO:0000305" key="3"/>
<protein>
    <recommendedName>
        <fullName evidence="1">Large ribosomal subunit protein uL18</fullName>
    </recommendedName>
    <alternativeName>
        <fullName evidence="3">50S ribosomal protein L18</fullName>
    </alternativeName>
</protein>
<dbReference type="EMBL" id="CP000878">
    <property type="protein sequence ID" value="ABX09594.1"/>
    <property type="molecule type" value="Genomic_DNA"/>
</dbReference>
<dbReference type="RefSeq" id="WP_012196214.1">
    <property type="nucleotide sequence ID" value="NC_009976.1"/>
</dbReference>
<dbReference type="SMR" id="A9BCN2"/>
<dbReference type="STRING" id="93059.P9211_16631"/>
<dbReference type="KEGG" id="pmj:P9211_16631"/>
<dbReference type="eggNOG" id="COG0256">
    <property type="taxonomic scope" value="Bacteria"/>
</dbReference>
<dbReference type="HOGENOM" id="CLU_098841_0_1_3"/>
<dbReference type="OrthoDB" id="9810939at2"/>
<dbReference type="Proteomes" id="UP000000788">
    <property type="component" value="Chromosome"/>
</dbReference>
<dbReference type="GO" id="GO:0022625">
    <property type="term" value="C:cytosolic large ribosomal subunit"/>
    <property type="evidence" value="ECO:0007669"/>
    <property type="project" value="TreeGrafter"/>
</dbReference>
<dbReference type="GO" id="GO:0008097">
    <property type="term" value="F:5S rRNA binding"/>
    <property type="evidence" value="ECO:0007669"/>
    <property type="project" value="TreeGrafter"/>
</dbReference>
<dbReference type="GO" id="GO:0003735">
    <property type="term" value="F:structural constituent of ribosome"/>
    <property type="evidence" value="ECO:0007669"/>
    <property type="project" value="InterPro"/>
</dbReference>
<dbReference type="GO" id="GO:0006412">
    <property type="term" value="P:translation"/>
    <property type="evidence" value="ECO:0007669"/>
    <property type="project" value="UniProtKB-UniRule"/>
</dbReference>
<dbReference type="CDD" id="cd00432">
    <property type="entry name" value="Ribosomal_L18_L5e"/>
    <property type="match status" value="1"/>
</dbReference>
<dbReference type="FunFam" id="3.30.420.100:FF:000001">
    <property type="entry name" value="50S ribosomal protein L18"/>
    <property type="match status" value="1"/>
</dbReference>
<dbReference type="Gene3D" id="3.30.420.100">
    <property type="match status" value="1"/>
</dbReference>
<dbReference type="HAMAP" id="MF_01337_B">
    <property type="entry name" value="Ribosomal_uL18_B"/>
    <property type="match status" value="1"/>
</dbReference>
<dbReference type="InterPro" id="IPR004389">
    <property type="entry name" value="Ribosomal_uL18_bac-type"/>
</dbReference>
<dbReference type="InterPro" id="IPR005484">
    <property type="entry name" value="Ribosomal_uL18_bac/euk"/>
</dbReference>
<dbReference type="NCBIfam" id="TIGR00060">
    <property type="entry name" value="L18_bact"/>
    <property type="match status" value="1"/>
</dbReference>
<dbReference type="PANTHER" id="PTHR12899">
    <property type="entry name" value="39S RIBOSOMAL PROTEIN L18, MITOCHONDRIAL"/>
    <property type="match status" value="1"/>
</dbReference>
<dbReference type="PANTHER" id="PTHR12899:SF3">
    <property type="entry name" value="LARGE RIBOSOMAL SUBUNIT PROTEIN UL18M"/>
    <property type="match status" value="1"/>
</dbReference>
<dbReference type="Pfam" id="PF00861">
    <property type="entry name" value="Ribosomal_L18p"/>
    <property type="match status" value="1"/>
</dbReference>
<dbReference type="SUPFAM" id="SSF53137">
    <property type="entry name" value="Translational machinery components"/>
    <property type="match status" value="1"/>
</dbReference>
<feature type="chain" id="PRO_1000142702" description="Large ribosomal subunit protein uL18">
    <location>
        <begin position="1"/>
        <end position="122"/>
    </location>
</feature>
<feature type="region of interest" description="Disordered" evidence="2">
    <location>
        <begin position="1"/>
        <end position="27"/>
    </location>
</feature>
<feature type="compositionally biased region" description="Basic residues" evidence="2">
    <location>
        <begin position="9"/>
        <end position="27"/>
    </location>
</feature>
<keyword id="KW-1185">Reference proteome</keyword>
<keyword id="KW-0687">Ribonucleoprotein</keyword>
<keyword id="KW-0689">Ribosomal protein</keyword>
<keyword id="KW-0694">RNA-binding</keyword>
<keyword id="KW-0699">rRNA-binding</keyword>
<name>RL18_PROM4</name>